<evidence type="ECO:0000255" key="1">
    <source>
        <dbReference type="HAMAP-Rule" id="MF_01043"/>
    </source>
</evidence>
<protein>
    <recommendedName>
        <fullName evidence="1">Glycerol-3-phosphate acyltransferase</fullName>
    </recommendedName>
    <alternativeName>
        <fullName evidence="1">G3P acyltransferase</fullName>
        <shortName evidence="1">GPAT</shortName>
        <ecNumber evidence="1">2.3.1.15</ecNumber>
        <ecNumber evidence="1">2.3.1.n5</ecNumber>
    </alternativeName>
    <alternativeName>
        <fullName evidence="1">Lysophosphatidic acid synthase</fullName>
        <shortName evidence="1">LPA synthase</shortName>
    </alternativeName>
</protein>
<reference key="1">
    <citation type="journal article" date="2009" name="J. Bacteriol.">
        <title>Genomic sequencing reveals regulatory mutations and recombinational events in the widely used MC4100 lineage of Escherichia coli K-12.</title>
        <authorList>
            <person name="Ferenci T."/>
            <person name="Zhou Z."/>
            <person name="Betteridge T."/>
            <person name="Ren Y."/>
            <person name="Liu Y."/>
            <person name="Feng L."/>
            <person name="Reeves P.R."/>
            <person name="Wang L."/>
        </authorList>
    </citation>
    <scope>NUCLEOTIDE SEQUENCE [LARGE SCALE GENOMIC DNA]</scope>
    <source>
        <strain>K12 / MC4100 / BW2952</strain>
    </source>
</reference>
<keyword id="KW-0997">Cell inner membrane</keyword>
<keyword id="KW-1003">Cell membrane</keyword>
<keyword id="KW-0444">Lipid biosynthesis</keyword>
<keyword id="KW-0443">Lipid metabolism</keyword>
<keyword id="KW-0472">Membrane</keyword>
<keyword id="KW-0594">Phospholipid biosynthesis</keyword>
<keyword id="KW-1208">Phospholipid metabolism</keyword>
<keyword id="KW-0808">Transferase</keyword>
<keyword id="KW-0812">Transmembrane</keyword>
<keyword id="KW-1133">Transmembrane helix</keyword>
<proteinExistence type="inferred from homology"/>
<comment type="function">
    <text evidence="1">Catalyzes the transfer of an acyl group from acyl-ACP to glycerol-3-phosphate (G3P) to form lysophosphatidic acid (LPA). This enzyme can also utilize acyl-CoA as fatty acyl donor, but not acyl-PO(4).</text>
</comment>
<comment type="catalytic activity">
    <reaction evidence="1">
        <text>sn-glycerol 3-phosphate + an acyl-CoA = a 1-acyl-sn-glycero-3-phosphate + CoA</text>
        <dbReference type="Rhea" id="RHEA:15325"/>
        <dbReference type="ChEBI" id="CHEBI:57287"/>
        <dbReference type="ChEBI" id="CHEBI:57597"/>
        <dbReference type="ChEBI" id="CHEBI:57970"/>
        <dbReference type="ChEBI" id="CHEBI:58342"/>
        <dbReference type="EC" id="2.3.1.15"/>
    </reaction>
</comment>
<comment type="catalytic activity">
    <reaction evidence="1">
        <text>a fatty acyl-[ACP] + sn-glycerol 3-phosphate = a 1-acyl-sn-glycero-3-phosphate + holo-[ACP]</text>
        <dbReference type="Rhea" id="RHEA:42300"/>
        <dbReference type="Rhea" id="RHEA-COMP:9685"/>
        <dbReference type="Rhea" id="RHEA-COMP:14125"/>
        <dbReference type="ChEBI" id="CHEBI:57597"/>
        <dbReference type="ChEBI" id="CHEBI:57970"/>
        <dbReference type="ChEBI" id="CHEBI:64479"/>
        <dbReference type="ChEBI" id="CHEBI:138651"/>
        <dbReference type="EC" id="2.3.1.n5"/>
    </reaction>
</comment>
<comment type="pathway">
    <text evidence="1">Lipid metabolism; phospholipid metabolism.</text>
</comment>
<comment type="subunit">
    <text evidence="1">Probably interacts with PlsX.</text>
</comment>
<comment type="subcellular location">
    <subcellularLocation>
        <location evidence="1">Cell inner membrane</location>
        <topology evidence="1">Multi-pass membrane protein</topology>
    </subcellularLocation>
</comment>
<comment type="similarity">
    <text evidence="1">Belongs to the PlsY family.</text>
</comment>
<organism>
    <name type="scientific">Escherichia coli (strain K12 / MC4100 / BW2952)</name>
    <dbReference type="NCBI Taxonomy" id="595496"/>
    <lineage>
        <taxon>Bacteria</taxon>
        <taxon>Pseudomonadati</taxon>
        <taxon>Pseudomonadota</taxon>
        <taxon>Gammaproteobacteria</taxon>
        <taxon>Enterobacterales</taxon>
        <taxon>Enterobacteriaceae</taxon>
        <taxon>Escherichia</taxon>
    </lineage>
</organism>
<accession>C4ZQX6</accession>
<sequence>MSAIAPGMILIAYLCGSISSAILVCRLCGLPDPRTSGSGNPGATNVLRIGGKGAAVAVLIFDVLKGMLPVWGAYELGVSPFWLGLIAIAACLGHIWPVFFGFKGGKGVATAFGAIAPIGWDLTGVMAGTWLLTVLLSGYSSLGAIVSALIAPFYVWWFKPQFTFPVSMLSCLILLRHHDNIQRLWRRQETKIWTKFKRKREKDPE</sequence>
<name>PLSY_ECOBW</name>
<feature type="chain" id="PRO_1000213408" description="Glycerol-3-phosphate acyltransferase">
    <location>
        <begin position="1"/>
        <end position="205"/>
    </location>
</feature>
<feature type="topological domain" description="Periplasmic" evidence="1">
    <location>
        <begin position="1"/>
        <end position="3"/>
    </location>
</feature>
<feature type="transmembrane region" description="Helical" evidence="1">
    <location>
        <begin position="4"/>
        <end position="24"/>
    </location>
</feature>
<feature type="topological domain" description="Cytoplasmic" evidence="1">
    <location>
        <begin position="25"/>
        <end position="52"/>
    </location>
</feature>
<feature type="transmembrane region" description="Helical" evidence="1">
    <location>
        <begin position="53"/>
        <end position="73"/>
    </location>
</feature>
<feature type="topological domain" description="Periplasmic" evidence="1">
    <location>
        <begin position="74"/>
        <end position="80"/>
    </location>
</feature>
<feature type="transmembrane region" description="Helical" evidence="1">
    <location>
        <begin position="81"/>
        <end position="101"/>
    </location>
</feature>
<feature type="topological domain" description="Cytoplasmic" evidence="1">
    <location>
        <begin position="102"/>
        <end position="111"/>
    </location>
</feature>
<feature type="transmembrane region" description="Helical" evidence="1">
    <location>
        <begin position="112"/>
        <end position="132"/>
    </location>
</feature>
<feature type="topological domain" description="Periplasmic" evidence="1">
    <location>
        <begin position="133"/>
        <end position="137"/>
    </location>
</feature>
<feature type="transmembrane region" description="Helical" evidence="1">
    <location>
        <begin position="138"/>
        <end position="158"/>
    </location>
</feature>
<feature type="topological domain" description="Cytoplasmic" evidence="1">
    <location>
        <begin position="159"/>
        <end position="205"/>
    </location>
</feature>
<gene>
    <name evidence="1" type="primary">plsY</name>
    <name type="synonym">ygiH</name>
    <name type="ordered locus">BWG_2770</name>
</gene>
<dbReference type="EC" id="2.3.1.15" evidence="1"/>
<dbReference type="EC" id="2.3.1.n5" evidence="1"/>
<dbReference type="EMBL" id="CP001396">
    <property type="protein sequence ID" value="ACR62229.1"/>
    <property type="molecule type" value="Genomic_DNA"/>
</dbReference>
<dbReference type="RefSeq" id="WP_001272796.1">
    <property type="nucleotide sequence ID" value="NC_012759.1"/>
</dbReference>
<dbReference type="SMR" id="C4ZQX6"/>
<dbReference type="GeneID" id="93778934"/>
<dbReference type="KEGG" id="ebw:BWG_2770"/>
<dbReference type="HOGENOM" id="CLU_081254_0_2_6"/>
<dbReference type="UniPathway" id="UPA00085"/>
<dbReference type="GO" id="GO:0005886">
    <property type="term" value="C:plasma membrane"/>
    <property type="evidence" value="ECO:0007669"/>
    <property type="project" value="UniProtKB-SubCell"/>
</dbReference>
<dbReference type="GO" id="GO:0043772">
    <property type="term" value="F:acyl-phosphate glycerol-3-phosphate acyltransferase activity"/>
    <property type="evidence" value="ECO:0007669"/>
    <property type="project" value="InterPro"/>
</dbReference>
<dbReference type="GO" id="GO:0004366">
    <property type="term" value="F:glycerol-3-phosphate O-acyltransferase activity"/>
    <property type="evidence" value="ECO:0007669"/>
    <property type="project" value="UniProtKB-UniRule"/>
</dbReference>
<dbReference type="GO" id="GO:0008654">
    <property type="term" value="P:phospholipid biosynthetic process"/>
    <property type="evidence" value="ECO:0007669"/>
    <property type="project" value="UniProtKB-UniRule"/>
</dbReference>
<dbReference type="HAMAP" id="MF_01043">
    <property type="entry name" value="PlsY"/>
    <property type="match status" value="1"/>
</dbReference>
<dbReference type="InterPro" id="IPR003811">
    <property type="entry name" value="G3P_acylTferase_PlsY"/>
</dbReference>
<dbReference type="NCBIfam" id="TIGR00023">
    <property type="entry name" value="glycerol-3-phosphate 1-O-acyltransferase PlsY"/>
    <property type="match status" value="1"/>
</dbReference>
<dbReference type="PANTHER" id="PTHR30309:SF0">
    <property type="entry name" value="GLYCEROL-3-PHOSPHATE ACYLTRANSFERASE-RELATED"/>
    <property type="match status" value="1"/>
</dbReference>
<dbReference type="PANTHER" id="PTHR30309">
    <property type="entry name" value="INNER MEMBRANE PROTEIN YGIH"/>
    <property type="match status" value="1"/>
</dbReference>
<dbReference type="Pfam" id="PF02660">
    <property type="entry name" value="G3P_acyltransf"/>
    <property type="match status" value="1"/>
</dbReference>
<dbReference type="SMART" id="SM01207">
    <property type="entry name" value="G3P_acyltransf"/>
    <property type="match status" value="1"/>
</dbReference>